<dbReference type="EC" id="3.1.1.4"/>
<dbReference type="EMBL" id="AB087496">
    <property type="protein sequence ID" value="BAC02719.1"/>
    <property type="molecule type" value="mRNA"/>
</dbReference>
<dbReference type="SMR" id="Q8JIG0"/>
<dbReference type="GO" id="GO:0005576">
    <property type="term" value="C:extracellular region"/>
    <property type="evidence" value="ECO:0007669"/>
    <property type="project" value="UniProtKB-SubCell"/>
</dbReference>
<dbReference type="GO" id="GO:0005509">
    <property type="term" value="F:calcium ion binding"/>
    <property type="evidence" value="ECO:0007669"/>
    <property type="project" value="InterPro"/>
</dbReference>
<dbReference type="GO" id="GO:0047498">
    <property type="term" value="F:calcium-dependent phospholipase A2 activity"/>
    <property type="evidence" value="ECO:0007669"/>
    <property type="project" value="TreeGrafter"/>
</dbReference>
<dbReference type="GO" id="GO:0005543">
    <property type="term" value="F:phospholipid binding"/>
    <property type="evidence" value="ECO:0007669"/>
    <property type="project" value="TreeGrafter"/>
</dbReference>
<dbReference type="GO" id="GO:0090729">
    <property type="term" value="F:toxin activity"/>
    <property type="evidence" value="ECO:0007669"/>
    <property type="project" value="UniProtKB-KW"/>
</dbReference>
<dbReference type="GO" id="GO:0050482">
    <property type="term" value="P:arachidonate secretion"/>
    <property type="evidence" value="ECO:0007669"/>
    <property type="project" value="InterPro"/>
</dbReference>
<dbReference type="GO" id="GO:0016042">
    <property type="term" value="P:lipid catabolic process"/>
    <property type="evidence" value="ECO:0007669"/>
    <property type="project" value="UniProtKB-KW"/>
</dbReference>
<dbReference type="GO" id="GO:0042130">
    <property type="term" value="P:negative regulation of T cell proliferation"/>
    <property type="evidence" value="ECO:0007669"/>
    <property type="project" value="TreeGrafter"/>
</dbReference>
<dbReference type="GO" id="GO:0006644">
    <property type="term" value="P:phospholipid metabolic process"/>
    <property type="evidence" value="ECO:0007669"/>
    <property type="project" value="InterPro"/>
</dbReference>
<dbReference type="CDD" id="cd00125">
    <property type="entry name" value="PLA2c"/>
    <property type="match status" value="1"/>
</dbReference>
<dbReference type="FunFam" id="1.20.90.10:FF:000001">
    <property type="entry name" value="Basic phospholipase A2 homolog"/>
    <property type="match status" value="1"/>
</dbReference>
<dbReference type="Gene3D" id="1.20.90.10">
    <property type="entry name" value="Phospholipase A2 domain"/>
    <property type="match status" value="1"/>
</dbReference>
<dbReference type="InterPro" id="IPR001211">
    <property type="entry name" value="PLipase_A2"/>
</dbReference>
<dbReference type="InterPro" id="IPR033112">
    <property type="entry name" value="PLipase_A2_Asp_AS"/>
</dbReference>
<dbReference type="InterPro" id="IPR016090">
    <property type="entry name" value="PLipase_A2_dom"/>
</dbReference>
<dbReference type="InterPro" id="IPR036444">
    <property type="entry name" value="PLipase_A2_dom_sf"/>
</dbReference>
<dbReference type="InterPro" id="IPR033113">
    <property type="entry name" value="PLipase_A2_His_AS"/>
</dbReference>
<dbReference type="PANTHER" id="PTHR11716">
    <property type="entry name" value="PHOSPHOLIPASE A2 FAMILY MEMBER"/>
    <property type="match status" value="1"/>
</dbReference>
<dbReference type="PANTHER" id="PTHR11716:SF9">
    <property type="entry name" value="PHOSPHOLIPASE A2, MEMBRANE ASSOCIATED"/>
    <property type="match status" value="1"/>
</dbReference>
<dbReference type="Pfam" id="PF00068">
    <property type="entry name" value="Phospholip_A2_1"/>
    <property type="match status" value="1"/>
</dbReference>
<dbReference type="PRINTS" id="PR00389">
    <property type="entry name" value="PHPHLIPASEA2"/>
</dbReference>
<dbReference type="SMART" id="SM00085">
    <property type="entry name" value="PA2c"/>
    <property type="match status" value="1"/>
</dbReference>
<dbReference type="SUPFAM" id="SSF48619">
    <property type="entry name" value="Phospholipase A2, PLA2"/>
    <property type="match status" value="1"/>
</dbReference>
<dbReference type="PROSITE" id="PS00119">
    <property type="entry name" value="PA2_ASP"/>
    <property type="match status" value="1"/>
</dbReference>
<dbReference type="PROSITE" id="PS00118">
    <property type="entry name" value="PA2_HIS"/>
    <property type="match status" value="1"/>
</dbReference>
<reference key="1">
    <citation type="journal article" date="2003" name="J. Mol. Evol.">
        <title>Interisland evolution of Trimeresurus flavoviridis venom phospholipase A(2) isozymes.</title>
        <authorList>
            <person name="Chijiwa T."/>
            <person name="Yamaguchi Y."/>
            <person name="Ogawa T."/>
            <person name="Deshimaru M."/>
            <person name="Nobuhisa I."/>
            <person name="Nakashima K."/>
            <person name="Oda-Ueda N."/>
            <person name="Fukumaki Y."/>
            <person name="Hattori S."/>
            <person name="Ohno M."/>
        </authorList>
    </citation>
    <scope>NUCLEOTIDE SEQUENCE [MRNA]</scope>
    <source>
        <strain>Amami-Oshima</strain>
        <tissue>Venom gland</tissue>
    </source>
</reference>
<comment type="function">
    <text>PLA2 catalyzes the calcium-dependent hydrolysis of the 2-acyl groups in 3-sn-phosphoglycerides.</text>
</comment>
<comment type="catalytic activity">
    <reaction evidence="3 4">
        <text>a 1,2-diacyl-sn-glycero-3-phosphocholine + H2O = a 1-acyl-sn-glycero-3-phosphocholine + a fatty acid + H(+)</text>
        <dbReference type="Rhea" id="RHEA:15801"/>
        <dbReference type="ChEBI" id="CHEBI:15377"/>
        <dbReference type="ChEBI" id="CHEBI:15378"/>
        <dbReference type="ChEBI" id="CHEBI:28868"/>
        <dbReference type="ChEBI" id="CHEBI:57643"/>
        <dbReference type="ChEBI" id="CHEBI:58168"/>
        <dbReference type="EC" id="3.1.1.4"/>
    </reaction>
</comment>
<comment type="cofactor">
    <cofactor evidence="1">
        <name>Ca(2+)</name>
        <dbReference type="ChEBI" id="CHEBI:29108"/>
    </cofactor>
    <text evidence="1">Binds 1 Ca(2+) ion.</text>
</comment>
<comment type="subcellular location">
    <subcellularLocation>
        <location evidence="1">Secreted</location>
    </subcellularLocation>
</comment>
<comment type="tissue specificity">
    <text>Expressed by the venom gland.</text>
</comment>
<comment type="similarity">
    <text evidence="5">Belongs to the phospholipase A2 family. Group II subfamily. D49 sub-subfamily.</text>
</comment>
<proteinExistence type="evidence at transcript level"/>
<protein>
    <recommendedName>
        <fullName>Basic phospholipase A2 PLA-B'</fullName>
        <shortName>svPLA2</shortName>
        <ecNumber>3.1.1.4</ecNumber>
    </recommendedName>
    <alternativeName>
        <fullName>Phosphatidylcholine 2-acylhydrolase</fullName>
    </alternativeName>
</protein>
<organism>
    <name type="scientific">Protobothrops flavoviridis</name>
    <name type="common">Habu</name>
    <name type="synonym">Trimeresurus flavoviridis</name>
    <dbReference type="NCBI Taxonomy" id="88087"/>
    <lineage>
        <taxon>Eukaryota</taxon>
        <taxon>Metazoa</taxon>
        <taxon>Chordata</taxon>
        <taxon>Craniata</taxon>
        <taxon>Vertebrata</taxon>
        <taxon>Euteleostomi</taxon>
        <taxon>Lepidosauria</taxon>
        <taxon>Squamata</taxon>
        <taxon>Bifurcata</taxon>
        <taxon>Unidentata</taxon>
        <taxon>Episquamata</taxon>
        <taxon>Toxicofera</taxon>
        <taxon>Serpentes</taxon>
        <taxon>Colubroidea</taxon>
        <taxon>Viperidae</taxon>
        <taxon>Crotalinae</taxon>
        <taxon>Protobothrops</taxon>
    </lineage>
</organism>
<evidence type="ECO:0000250" key="1"/>
<evidence type="ECO:0000250" key="2">
    <source>
        <dbReference type="UniProtKB" id="O42187"/>
    </source>
</evidence>
<evidence type="ECO:0000255" key="3">
    <source>
        <dbReference type="PROSITE-ProRule" id="PRU10035"/>
    </source>
</evidence>
<evidence type="ECO:0000255" key="4">
    <source>
        <dbReference type="PROSITE-ProRule" id="PRU10036"/>
    </source>
</evidence>
<evidence type="ECO:0000305" key="5"/>
<name>PA2BQ_PROFL</name>
<accession>Q8JIG0</accession>
<keyword id="KW-0106">Calcium</keyword>
<keyword id="KW-1015">Disulfide bond</keyword>
<keyword id="KW-0378">Hydrolase</keyword>
<keyword id="KW-0442">Lipid degradation</keyword>
<keyword id="KW-0443">Lipid metabolism</keyword>
<keyword id="KW-0479">Metal-binding</keyword>
<keyword id="KW-0964">Secreted</keyword>
<keyword id="KW-0732">Signal</keyword>
<keyword id="KW-0800">Toxin</keyword>
<feature type="signal peptide" evidence="1">
    <location>
        <begin position="1"/>
        <end position="16"/>
    </location>
</feature>
<feature type="chain" id="PRO_0000022956" description="Basic phospholipase A2 PLA-B'">
    <location>
        <begin position="17"/>
        <end position="138"/>
    </location>
</feature>
<feature type="active site" evidence="2">
    <location>
        <position position="63"/>
    </location>
</feature>
<feature type="active site" evidence="2">
    <location>
        <position position="105"/>
    </location>
</feature>
<feature type="binding site" evidence="2">
    <location>
        <position position="43"/>
    </location>
    <ligand>
        <name>Ca(2+)</name>
        <dbReference type="ChEBI" id="CHEBI:29108"/>
    </ligand>
</feature>
<feature type="binding site" evidence="2">
    <location>
        <position position="45"/>
    </location>
    <ligand>
        <name>Ca(2+)</name>
        <dbReference type="ChEBI" id="CHEBI:29108"/>
    </ligand>
</feature>
<feature type="binding site" evidence="2">
    <location>
        <position position="47"/>
    </location>
    <ligand>
        <name>Ca(2+)</name>
        <dbReference type="ChEBI" id="CHEBI:29108"/>
    </ligand>
</feature>
<feature type="binding site" evidence="2">
    <location>
        <position position="64"/>
    </location>
    <ligand>
        <name>Ca(2+)</name>
        <dbReference type="ChEBI" id="CHEBI:29108"/>
    </ligand>
</feature>
<feature type="disulfide bond" evidence="2">
    <location>
        <begin position="42"/>
        <end position="131"/>
    </location>
</feature>
<feature type="disulfide bond" evidence="2">
    <location>
        <begin position="44"/>
        <end position="60"/>
    </location>
</feature>
<feature type="disulfide bond" evidence="2">
    <location>
        <begin position="59"/>
        <end position="111"/>
    </location>
</feature>
<feature type="disulfide bond" evidence="2">
    <location>
        <begin position="65"/>
        <end position="138"/>
    </location>
</feature>
<feature type="disulfide bond" evidence="2">
    <location>
        <begin position="66"/>
        <end position="104"/>
    </location>
</feature>
<feature type="disulfide bond" evidence="2">
    <location>
        <begin position="73"/>
        <end position="97"/>
    </location>
</feature>
<feature type="disulfide bond" evidence="2">
    <location>
        <begin position="91"/>
        <end position="102"/>
    </location>
</feature>
<sequence length="138" mass="15703">MRTLWITAVLLVGVEGHLLQFRKMIKKMTGKEPIVSYAFYGCYCGKGGRGKPKDATDRCCFVHDCCYGKVTGCDPKWDYYTYSSENGDIVCEGDNPCTKEVCECDKAAAICFRDNLKTYKKRYMTFPDIFCTDPTEKC</sequence>